<feature type="chain" id="PRO_0000410209" description="FK506-binding protein 4">
    <location>
        <begin position="1"/>
        <end position="405"/>
    </location>
</feature>
<feature type="domain" description="PPIase FKBP-type" evidence="3">
    <location>
        <begin position="319"/>
        <end position="405"/>
    </location>
</feature>
<feature type="region of interest" description="Disordered" evidence="4">
    <location>
        <begin position="49"/>
        <end position="117"/>
    </location>
</feature>
<feature type="region of interest" description="Disordered" evidence="4">
    <location>
        <begin position="164"/>
        <end position="297"/>
    </location>
</feature>
<feature type="compositionally biased region" description="Acidic residues" evidence="4">
    <location>
        <begin position="59"/>
        <end position="84"/>
    </location>
</feature>
<feature type="compositionally biased region" description="Acidic residues" evidence="4">
    <location>
        <begin position="98"/>
        <end position="117"/>
    </location>
</feature>
<feature type="compositionally biased region" description="Acidic residues" evidence="4">
    <location>
        <begin position="165"/>
        <end position="201"/>
    </location>
</feature>
<feature type="compositionally biased region" description="Basic and acidic residues" evidence="4">
    <location>
        <begin position="238"/>
        <end position="252"/>
    </location>
</feature>
<feature type="compositionally biased region" description="Basic and acidic residues" evidence="4">
    <location>
        <begin position="265"/>
        <end position="276"/>
    </location>
</feature>
<gene>
    <name type="primary">FPR4</name>
    <name type="ordered locus">CNBD3620</name>
</gene>
<name>FKBP4_CRYNB</name>
<keyword id="KW-0143">Chaperone</keyword>
<keyword id="KW-0413">Isomerase</keyword>
<keyword id="KW-0539">Nucleus</keyword>
<keyword id="KW-0697">Rotamase</keyword>
<accession>P0CP99</accession>
<accession>Q55TU1</accession>
<accession>Q5KIJ5</accession>
<proteinExistence type="inferred from homology"/>
<reference key="1">
    <citation type="journal article" date="2005" name="Science">
        <title>The genome of the basidiomycetous yeast and human pathogen Cryptococcus neoformans.</title>
        <authorList>
            <person name="Loftus B.J."/>
            <person name="Fung E."/>
            <person name="Roncaglia P."/>
            <person name="Rowley D."/>
            <person name="Amedeo P."/>
            <person name="Bruno D."/>
            <person name="Vamathevan J."/>
            <person name="Miranda M."/>
            <person name="Anderson I.J."/>
            <person name="Fraser J.A."/>
            <person name="Allen J.E."/>
            <person name="Bosdet I.E."/>
            <person name="Brent M.R."/>
            <person name="Chiu R."/>
            <person name="Doering T.L."/>
            <person name="Donlin M.J."/>
            <person name="D'Souza C.A."/>
            <person name="Fox D.S."/>
            <person name="Grinberg V."/>
            <person name="Fu J."/>
            <person name="Fukushima M."/>
            <person name="Haas B.J."/>
            <person name="Huang J.C."/>
            <person name="Janbon G."/>
            <person name="Jones S.J.M."/>
            <person name="Koo H.L."/>
            <person name="Krzywinski M.I."/>
            <person name="Kwon-Chung K.J."/>
            <person name="Lengeler K.B."/>
            <person name="Maiti R."/>
            <person name="Marra M.A."/>
            <person name="Marra R.E."/>
            <person name="Mathewson C.A."/>
            <person name="Mitchell T.G."/>
            <person name="Pertea M."/>
            <person name="Riggs F.R."/>
            <person name="Salzberg S.L."/>
            <person name="Schein J.E."/>
            <person name="Shvartsbeyn A."/>
            <person name="Shin H."/>
            <person name="Shumway M."/>
            <person name="Specht C.A."/>
            <person name="Suh B.B."/>
            <person name="Tenney A."/>
            <person name="Utterback T.R."/>
            <person name="Wickes B.L."/>
            <person name="Wortman J.R."/>
            <person name="Wye N.H."/>
            <person name="Kronstad J.W."/>
            <person name="Lodge J.K."/>
            <person name="Heitman J."/>
            <person name="Davis R.W."/>
            <person name="Fraser C.M."/>
            <person name="Hyman R.W."/>
        </authorList>
    </citation>
    <scope>NUCLEOTIDE SEQUENCE [LARGE SCALE GENOMIC DNA]</scope>
    <source>
        <strain>B-3501A</strain>
    </source>
</reference>
<dbReference type="EC" id="5.2.1.8" evidence="2"/>
<dbReference type="EMBL" id="AAEY01000020">
    <property type="protein sequence ID" value="EAL21308.1"/>
    <property type="molecule type" value="Genomic_DNA"/>
</dbReference>
<dbReference type="RefSeq" id="XP_775955.1">
    <property type="nucleotide sequence ID" value="XM_770862.1"/>
</dbReference>
<dbReference type="SMR" id="P0CP99"/>
<dbReference type="EnsemblFungi" id="AAW42924">
    <property type="protein sequence ID" value="AAW42924"/>
    <property type="gene ID" value="CND02730"/>
</dbReference>
<dbReference type="GeneID" id="4935751"/>
<dbReference type="KEGG" id="cnb:CNBD3620"/>
<dbReference type="VEuPathDB" id="FungiDB:CNBD3620"/>
<dbReference type="HOGENOM" id="CLU_022297_3_0_1"/>
<dbReference type="OrthoDB" id="9464at5206"/>
<dbReference type="GO" id="GO:0000785">
    <property type="term" value="C:chromatin"/>
    <property type="evidence" value="ECO:0007669"/>
    <property type="project" value="TreeGrafter"/>
</dbReference>
<dbReference type="GO" id="GO:0005730">
    <property type="term" value="C:nucleolus"/>
    <property type="evidence" value="ECO:0007669"/>
    <property type="project" value="TreeGrafter"/>
</dbReference>
<dbReference type="GO" id="GO:0003755">
    <property type="term" value="F:peptidyl-prolyl cis-trans isomerase activity"/>
    <property type="evidence" value="ECO:0007669"/>
    <property type="project" value="UniProtKB-KW"/>
</dbReference>
<dbReference type="FunFam" id="3.10.50.40:FF:000006">
    <property type="entry name" value="Peptidyl-prolyl cis-trans isomerase"/>
    <property type="match status" value="1"/>
</dbReference>
<dbReference type="Gene3D" id="3.10.50.40">
    <property type="match status" value="1"/>
</dbReference>
<dbReference type="Gene3D" id="2.60.120.340">
    <property type="entry name" value="Nucleoplasmin core domain"/>
    <property type="match status" value="1"/>
</dbReference>
<dbReference type="InterPro" id="IPR041232">
    <property type="entry name" value="NPL"/>
</dbReference>
<dbReference type="InterPro" id="IPR046357">
    <property type="entry name" value="PPIase_dom_sf"/>
</dbReference>
<dbReference type="InterPro" id="IPR001179">
    <property type="entry name" value="PPIase_FKBP_dom"/>
</dbReference>
<dbReference type="InterPro" id="IPR023566">
    <property type="entry name" value="PPIase_Fpr3/Fpr4-like"/>
</dbReference>
<dbReference type="PANTHER" id="PTHR43811:SF19">
    <property type="entry name" value="39 KDA FK506-BINDING NUCLEAR PROTEIN"/>
    <property type="match status" value="1"/>
</dbReference>
<dbReference type="PANTHER" id="PTHR43811">
    <property type="entry name" value="FKBP-TYPE PEPTIDYL-PROLYL CIS-TRANS ISOMERASE FKPA"/>
    <property type="match status" value="1"/>
</dbReference>
<dbReference type="Pfam" id="PF00254">
    <property type="entry name" value="FKBP_C"/>
    <property type="match status" value="1"/>
</dbReference>
<dbReference type="Pfam" id="PF17800">
    <property type="entry name" value="NPL"/>
    <property type="match status" value="1"/>
</dbReference>
<dbReference type="PIRSF" id="PIRSF001473">
    <property type="entry name" value="FK506-bp_FPR3"/>
    <property type="match status" value="1"/>
</dbReference>
<dbReference type="SUPFAM" id="SSF54534">
    <property type="entry name" value="FKBP-like"/>
    <property type="match status" value="1"/>
</dbReference>
<dbReference type="PROSITE" id="PS50059">
    <property type="entry name" value="FKBP_PPIASE"/>
    <property type="match status" value="1"/>
</dbReference>
<evidence type="ECO:0000250" key="1"/>
<evidence type="ECO:0000250" key="2">
    <source>
        <dbReference type="UniProtKB" id="Q06205"/>
    </source>
</evidence>
<evidence type="ECO:0000255" key="3">
    <source>
        <dbReference type="PROSITE-ProRule" id="PRU00277"/>
    </source>
</evidence>
<evidence type="ECO:0000256" key="4">
    <source>
        <dbReference type="SAM" id="MobiDB-lite"/>
    </source>
</evidence>
<evidence type="ECO:0000305" key="5"/>
<comment type="function">
    <text evidence="2">PPIase that acts as a histone chaperone. Histone proline isomerase that increases the rate of cis-trans isomerization at prolines on the histone H3 N-terminal tail. Proline isomerization influences H3 methylation thereby regulating gene expression.</text>
</comment>
<comment type="catalytic activity">
    <reaction evidence="2">
        <text>[protein]-peptidylproline (omega=180) = [protein]-peptidylproline (omega=0)</text>
        <dbReference type="Rhea" id="RHEA:16237"/>
        <dbReference type="Rhea" id="RHEA-COMP:10747"/>
        <dbReference type="Rhea" id="RHEA-COMP:10748"/>
        <dbReference type="ChEBI" id="CHEBI:83833"/>
        <dbReference type="ChEBI" id="CHEBI:83834"/>
        <dbReference type="EC" id="5.2.1.8"/>
    </reaction>
</comment>
<comment type="activity regulation">
    <text evidence="1">Inhibited by both FK506 and rapamycin.</text>
</comment>
<comment type="subunit">
    <text evidence="2">Binds to histones H3 and H4.</text>
</comment>
<comment type="subcellular location">
    <subcellularLocation>
        <location evidence="2">Nucleus</location>
    </subcellularLocation>
</comment>
<comment type="similarity">
    <text evidence="5">Belongs to the FKBP-type PPIase family. FKBP3/4 subfamily.</text>
</comment>
<protein>
    <recommendedName>
        <fullName>FK506-binding protein 4</fullName>
        <ecNumber evidence="2">5.2.1.8</ecNumber>
    </recommendedName>
    <alternativeName>
        <fullName evidence="2">Histone proline isomerase</fullName>
    </alternativeName>
    <alternativeName>
        <fullName>Peptidyl-prolyl cis-trans isomerase</fullName>
        <shortName>PPIase</shortName>
    </alternativeName>
    <alternativeName>
        <fullName>Rotamase</fullName>
    </alternativeName>
</protein>
<organism>
    <name type="scientific">Cryptococcus neoformans var. neoformans serotype D (strain B-3501A)</name>
    <name type="common">Filobasidiella neoformans</name>
    <dbReference type="NCBI Taxonomy" id="283643"/>
    <lineage>
        <taxon>Eukaryota</taxon>
        <taxon>Fungi</taxon>
        <taxon>Dikarya</taxon>
        <taxon>Basidiomycota</taxon>
        <taxon>Agaricomycotina</taxon>
        <taxon>Tremellomycetes</taxon>
        <taxon>Tremellales</taxon>
        <taxon>Cryptococcaceae</taxon>
        <taxon>Cryptococcus</taxon>
        <taxon>Cryptococcus neoformans species complex</taxon>
    </lineage>
</organism>
<sequence length="405" mass="44436">MPLAMNLWSLTLLPGQQYPTYVRRDFQITNAALGEELRSKDGRSVVKVTHNPISQSMLESDDEWSDEDEDEEILSEEDDGEMEVEEVKQKKGKKAEKVEEEDSEEEDEDESDFEDELEETNVLCSLTAGKTEQASLNLTFVRGEVVVFEVTGDNVVHLMGNYIQQDEDSDDESDSDFDGEDDYSELYGSDDDLELDSEEEAAVAKITEIPDEPTPKTKKALPAADKKPVPEAKPAQKRKAEELESPAKEDAALSKAQKKKLAKKAKVEGEKAEEKPAAAAVAEKPATKKEAKAPQKKTLPSGLIIEDIKIGDGPVAKTGKRLGMRYIGKLTNGKQFDANTSGKPFSFVLGKGEVIRGWDEGLAGMAVGGERRLTIPAALAYGNQKIPGIPKNSTLKFDVKLVSIN</sequence>